<reference key="1">
    <citation type="journal article" date="2013" name="Nature">
        <title>The zebrafish reference genome sequence and its relationship to the human genome.</title>
        <authorList>
            <person name="Howe K."/>
            <person name="Clark M.D."/>
            <person name="Torroja C.F."/>
            <person name="Torrance J."/>
            <person name="Berthelot C."/>
            <person name="Muffato M."/>
            <person name="Collins J.E."/>
            <person name="Humphray S."/>
            <person name="McLaren K."/>
            <person name="Matthews L."/>
            <person name="McLaren S."/>
            <person name="Sealy I."/>
            <person name="Caccamo M."/>
            <person name="Churcher C."/>
            <person name="Scott C."/>
            <person name="Barrett J.C."/>
            <person name="Koch R."/>
            <person name="Rauch G.J."/>
            <person name="White S."/>
            <person name="Chow W."/>
            <person name="Kilian B."/>
            <person name="Quintais L.T."/>
            <person name="Guerra-Assuncao J.A."/>
            <person name="Zhou Y."/>
            <person name="Gu Y."/>
            <person name="Yen J."/>
            <person name="Vogel J.H."/>
            <person name="Eyre T."/>
            <person name="Redmond S."/>
            <person name="Banerjee R."/>
            <person name="Chi J."/>
            <person name="Fu B."/>
            <person name="Langley E."/>
            <person name="Maguire S.F."/>
            <person name="Laird G.K."/>
            <person name="Lloyd D."/>
            <person name="Kenyon E."/>
            <person name="Donaldson S."/>
            <person name="Sehra H."/>
            <person name="Almeida-King J."/>
            <person name="Loveland J."/>
            <person name="Trevanion S."/>
            <person name="Jones M."/>
            <person name="Quail M."/>
            <person name="Willey D."/>
            <person name="Hunt A."/>
            <person name="Burton J."/>
            <person name="Sims S."/>
            <person name="McLay K."/>
            <person name="Plumb B."/>
            <person name="Davis J."/>
            <person name="Clee C."/>
            <person name="Oliver K."/>
            <person name="Clark R."/>
            <person name="Riddle C."/>
            <person name="Elliot D."/>
            <person name="Threadgold G."/>
            <person name="Harden G."/>
            <person name="Ware D."/>
            <person name="Begum S."/>
            <person name="Mortimore B."/>
            <person name="Kerry G."/>
            <person name="Heath P."/>
            <person name="Phillimore B."/>
            <person name="Tracey A."/>
            <person name="Corby N."/>
            <person name="Dunn M."/>
            <person name="Johnson C."/>
            <person name="Wood J."/>
            <person name="Clark S."/>
            <person name="Pelan S."/>
            <person name="Griffiths G."/>
            <person name="Smith M."/>
            <person name="Glithero R."/>
            <person name="Howden P."/>
            <person name="Barker N."/>
            <person name="Lloyd C."/>
            <person name="Stevens C."/>
            <person name="Harley J."/>
            <person name="Holt K."/>
            <person name="Panagiotidis G."/>
            <person name="Lovell J."/>
            <person name="Beasley H."/>
            <person name="Henderson C."/>
            <person name="Gordon D."/>
            <person name="Auger K."/>
            <person name="Wright D."/>
            <person name="Collins J."/>
            <person name="Raisen C."/>
            <person name="Dyer L."/>
            <person name="Leung K."/>
            <person name="Robertson L."/>
            <person name="Ambridge K."/>
            <person name="Leongamornlert D."/>
            <person name="McGuire S."/>
            <person name="Gilderthorp R."/>
            <person name="Griffiths C."/>
            <person name="Manthravadi D."/>
            <person name="Nichol S."/>
            <person name="Barker G."/>
            <person name="Whitehead S."/>
            <person name="Kay M."/>
            <person name="Brown J."/>
            <person name="Murnane C."/>
            <person name="Gray E."/>
            <person name="Humphries M."/>
            <person name="Sycamore N."/>
            <person name="Barker D."/>
            <person name="Saunders D."/>
            <person name="Wallis J."/>
            <person name="Babbage A."/>
            <person name="Hammond S."/>
            <person name="Mashreghi-Mohammadi M."/>
            <person name="Barr L."/>
            <person name="Martin S."/>
            <person name="Wray P."/>
            <person name="Ellington A."/>
            <person name="Matthews N."/>
            <person name="Ellwood M."/>
            <person name="Woodmansey R."/>
            <person name="Clark G."/>
            <person name="Cooper J."/>
            <person name="Tromans A."/>
            <person name="Grafham D."/>
            <person name="Skuce C."/>
            <person name="Pandian R."/>
            <person name="Andrews R."/>
            <person name="Harrison E."/>
            <person name="Kimberley A."/>
            <person name="Garnett J."/>
            <person name="Fosker N."/>
            <person name="Hall R."/>
            <person name="Garner P."/>
            <person name="Kelly D."/>
            <person name="Bird C."/>
            <person name="Palmer S."/>
            <person name="Gehring I."/>
            <person name="Berger A."/>
            <person name="Dooley C.M."/>
            <person name="Ersan-Urun Z."/>
            <person name="Eser C."/>
            <person name="Geiger H."/>
            <person name="Geisler M."/>
            <person name="Karotki L."/>
            <person name="Kirn A."/>
            <person name="Konantz J."/>
            <person name="Konantz M."/>
            <person name="Oberlander M."/>
            <person name="Rudolph-Geiger S."/>
            <person name="Teucke M."/>
            <person name="Lanz C."/>
            <person name="Raddatz G."/>
            <person name="Osoegawa K."/>
            <person name="Zhu B."/>
            <person name="Rapp A."/>
            <person name="Widaa S."/>
            <person name="Langford C."/>
            <person name="Yang F."/>
            <person name="Schuster S.C."/>
            <person name="Carter N.P."/>
            <person name="Harrow J."/>
            <person name="Ning Z."/>
            <person name="Herrero J."/>
            <person name="Searle S.M."/>
            <person name="Enright A."/>
            <person name="Geisler R."/>
            <person name="Plasterk R.H."/>
            <person name="Lee C."/>
            <person name="Westerfield M."/>
            <person name="de Jong P.J."/>
            <person name="Zon L.I."/>
            <person name="Postlethwait J.H."/>
            <person name="Nusslein-Volhard C."/>
            <person name="Hubbard T.J."/>
            <person name="Roest Crollius H."/>
            <person name="Rogers J."/>
            <person name="Stemple D.L."/>
        </authorList>
    </citation>
    <scope>NUCLEOTIDE SEQUENCE [LARGE SCALE GENOMIC DNA]</scope>
    <source>
        <strain>Tuebingen</strain>
    </source>
</reference>
<reference key="2">
    <citation type="submission" date="2007-06" db="EMBL/GenBank/DDBJ databases">
        <authorList>
            <consortium name="NIH - Zebrafish Gene Collection (ZGC) project"/>
        </authorList>
    </citation>
    <scope>NUCLEOTIDE SEQUENCE [LARGE SCALE MRNA]</scope>
    <source>
        <strain>AB</strain>
    </source>
</reference>
<keyword id="KW-1003">Cell membrane</keyword>
<keyword id="KW-0963">Cytoplasm</keyword>
<keyword id="KW-0344">Guanine-nucleotide releasing factor</keyword>
<keyword id="KW-0472">Membrane</keyword>
<keyword id="KW-1185">Reference proteome</keyword>
<sequence>MYRRNGLPASVSITSRNTQDSSSSESLDGRSLDSAKSFDAVVFDMLKVTPEEFASQITLMDAPVFKAIQPEELASCGWNKKEKHSLSPNVVAFTRRFNQVSFWAVREILTAQTLKIRAEILGHFIKIAKKLLELNNLHSLVSVVSALQSAPIFRLSKTWALISRKDKATFEKLDFLTSKEENYNRMREYTRSLKMAPCIPYLGIYLFDMTYIDSAYPASDSIIETEQRTNQMNNLLRIISDLQVSCKYDHLITLPHVQKYLMSVRYIEELQKFVEDDNYSLSLKIEPGNSSPRLVSSKEDLGGPSEVSMSVRYNRRPTCPDTSVVAHLPTPPPARHRKSHSLGNNMMCQFGVVESKSATFPEKEKARHLLDDSFLESHSPVRNHTHDSVFTNGISLGSRESSFSDELSSTVERGRMYATLGPNWRVPICNSPRSRSYIYSTPGAVSSYECSTLSSITIEGPLRRKTLMKEGKKPTLSSWKRYWIVLSGSILIYFGSKALRANERRHYKSRPCKKITLTGWMVVLPDNPEHPNIFQLTDPDRGNVYKFQTGSRFSAIIWHRHLAEACRSTRPQMPANLMSFE</sequence>
<gene>
    <name type="primary">ralgps1</name>
    <name type="ORF">si:dkey-191c17.1</name>
    <name type="ORF">zgc:165535</name>
</gene>
<protein>
    <recommendedName>
        <fullName>Ras-specific guanine nucleotide-releasing factor RalGPS1</fullName>
    </recommendedName>
    <alternativeName>
        <fullName>Ral GEF with PH domain and SH3-binding motif 1</fullName>
    </alternativeName>
    <alternativeName>
        <fullName>RalA exchange factor RalGPS1</fullName>
    </alternativeName>
</protein>
<accession>B0UXH6</accession>
<accession>A6H8S8</accession>
<evidence type="ECO:0000250" key="1"/>
<evidence type="ECO:0000255" key="2">
    <source>
        <dbReference type="PROSITE-ProRule" id="PRU00145"/>
    </source>
</evidence>
<evidence type="ECO:0000255" key="3">
    <source>
        <dbReference type="PROSITE-ProRule" id="PRU00168"/>
    </source>
</evidence>
<evidence type="ECO:0000256" key="4">
    <source>
        <dbReference type="SAM" id="MobiDB-lite"/>
    </source>
</evidence>
<evidence type="ECO:0000305" key="5"/>
<dbReference type="EMBL" id="CT573394">
    <property type="protein sequence ID" value="CAQ14410.1"/>
    <property type="molecule type" value="Genomic_DNA"/>
</dbReference>
<dbReference type="EMBL" id="CR361562">
    <property type="protein sequence ID" value="CAQ14410.1"/>
    <property type="status" value="JOINED"/>
    <property type="molecule type" value="Genomic_DNA"/>
</dbReference>
<dbReference type="EMBL" id="CR361562">
    <property type="protein sequence ID" value="CAQ14617.1"/>
    <property type="molecule type" value="Genomic_DNA"/>
</dbReference>
<dbReference type="EMBL" id="CT573394">
    <property type="protein sequence ID" value="CAQ14617.1"/>
    <property type="status" value="JOINED"/>
    <property type="molecule type" value="Genomic_DNA"/>
</dbReference>
<dbReference type="EMBL" id="BC146736">
    <property type="protein sequence ID" value="AAI46737.1"/>
    <property type="molecule type" value="mRNA"/>
</dbReference>
<dbReference type="RefSeq" id="NP_001093616.1">
    <property type="nucleotide sequence ID" value="NM_001100146.1"/>
</dbReference>
<dbReference type="SMR" id="B0UXH6"/>
<dbReference type="FunCoup" id="B0UXH6">
    <property type="interactions" value="795"/>
</dbReference>
<dbReference type="STRING" id="7955.ENSDARP00000089610"/>
<dbReference type="PaxDb" id="7955-ENSDARP00000089610"/>
<dbReference type="Ensembl" id="ENSDART00000098840">
    <property type="protein sequence ID" value="ENSDARP00000089610"/>
    <property type="gene ID" value="ENSDARG00000068370"/>
</dbReference>
<dbReference type="GeneID" id="100101642"/>
<dbReference type="KEGG" id="dre:100101642"/>
<dbReference type="AGR" id="ZFIN:ZDB-GENE-070720-16"/>
<dbReference type="CTD" id="9649"/>
<dbReference type="ZFIN" id="ZDB-GENE-070720-16">
    <property type="gene designation" value="ralgps1"/>
</dbReference>
<dbReference type="eggNOG" id="KOG3417">
    <property type="taxonomic scope" value="Eukaryota"/>
</dbReference>
<dbReference type="HOGENOM" id="CLU_021333_0_1_1"/>
<dbReference type="InParanoid" id="B0UXH6"/>
<dbReference type="OMA" id="RSRSCIY"/>
<dbReference type="OrthoDB" id="546434at2759"/>
<dbReference type="PhylomeDB" id="B0UXH6"/>
<dbReference type="TreeFam" id="TF352150"/>
<dbReference type="PRO" id="PR:B0UXH6"/>
<dbReference type="Proteomes" id="UP000000437">
    <property type="component" value="Chromosome 8"/>
</dbReference>
<dbReference type="Bgee" id="ENSDARG00000068370">
    <property type="expression patterns" value="Expressed in retina and 4 other cell types or tissues"/>
</dbReference>
<dbReference type="GO" id="GO:0005737">
    <property type="term" value="C:cytoplasm"/>
    <property type="evidence" value="ECO:0007669"/>
    <property type="project" value="UniProtKB-SubCell"/>
</dbReference>
<dbReference type="GO" id="GO:0005886">
    <property type="term" value="C:plasma membrane"/>
    <property type="evidence" value="ECO:0000318"/>
    <property type="project" value="GO_Central"/>
</dbReference>
<dbReference type="GO" id="GO:0005085">
    <property type="term" value="F:guanyl-nucleotide exchange factor activity"/>
    <property type="evidence" value="ECO:0000318"/>
    <property type="project" value="GO_Central"/>
</dbReference>
<dbReference type="GO" id="GO:0007265">
    <property type="term" value="P:Ras protein signal transduction"/>
    <property type="evidence" value="ECO:0000318"/>
    <property type="project" value="GO_Central"/>
</dbReference>
<dbReference type="CDD" id="cd13310">
    <property type="entry name" value="PH_RalGPS1_2"/>
    <property type="match status" value="1"/>
</dbReference>
<dbReference type="CDD" id="cd00155">
    <property type="entry name" value="RasGEF"/>
    <property type="match status" value="1"/>
</dbReference>
<dbReference type="FunFam" id="1.10.840.10:FF:000010">
    <property type="entry name" value="ras-specific guanine nucleotide-releasing factor RalGPS1 isoform X1"/>
    <property type="match status" value="1"/>
</dbReference>
<dbReference type="Gene3D" id="2.30.29.30">
    <property type="entry name" value="Pleckstrin-homology domain (PH domain)/Phosphotyrosine-binding domain (PTB)"/>
    <property type="match status" value="1"/>
</dbReference>
<dbReference type="Gene3D" id="1.10.840.10">
    <property type="entry name" value="Ras guanine-nucleotide exchange factors catalytic domain"/>
    <property type="match status" value="1"/>
</dbReference>
<dbReference type="InterPro" id="IPR011993">
    <property type="entry name" value="PH-like_dom_sf"/>
</dbReference>
<dbReference type="InterPro" id="IPR001849">
    <property type="entry name" value="PH_domain"/>
</dbReference>
<dbReference type="InterPro" id="IPR008937">
    <property type="entry name" value="Ras-like_GEF"/>
</dbReference>
<dbReference type="InterPro" id="IPR023578">
    <property type="entry name" value="Ras_GEF_dom_sf"/>
</dbReference>
<dbReference type="InterPro" id="IPR001895">
    <property type="entry name" value="RASGEF_cat_dom"/>
</dbReference>
<dbReference type="InterPro" id="IPR036964">
    <property type="entry name" value="RASGEF_cat_dom_sf"/>
</dbReference>
<dbReference type="PANTHER" id="PTHR23113">
    <property type="entry name" value="GUANINE NUCLEOTIDE EXCHANGE FACTOR"/>
    <property type="match status" value="1"/>
</dbReference>
<dbReference type="PANTHER" id="PTHR23113:SF167">
    <property type="entry name" value="RAS-SPECIFIC GUANINE NUCLEOTIDE-RELEASING FACTOR RALGPS1"/>
    <property type="match status" value="1"/>
</dbReference>
<dbReference type="Pfam" id="PF00169">
    <property type="entry name" value="PH"/>
    <property type="match status" value="1"/>
</dbReference>
<dbReference type="Pfam" id="PF00617">
    <property type="entry name" value="RasGEF"/>
    <property type="match status" value="1"/>
</dbReference>
<dbReference type="SMART" id="SM00233">
    <property type="entry name" value="PH"/>
    <property type="match status" value="1"/>
</dbReference>
<dbReference type="SMART" id="SM00147">
    <property type="entry name" value="RasGEF"/>
    <property type="match status" value="1"/>
</dbReference>
<dbReference type="SUPFAM" id="SSF50729">
    <property type="entry name" value="PH domain-like"/>
    <property type="match status" value="1"/>
</dbReference>
<dbReference type="SUPFAM" id="SSF48366">
    <property type="entry name" value="Ras GEF"/>
    <property type="match status" value="1"/>
</dbReference>
<dbReference type="PROSITE" id="PS50003">
    <property type="entry name" value="PH_DOMAIN"/>
    <property type="match status" value="1"/>
</dbReference>
<dbReference type="PROSITE" id="PS50009">
    <property type="entry name" value="RASGEF_CAT"/>
    <property type="match status" value="1"/>
</dbReference>
<feature type="chain" id="PRO_0000333195" description="Ras-specific guanine nucleotide-releasing factor RalGPS1">
    <location>
        <begin position="1"/>
        <end position="581"/>
    </location>
</feature>
<feature type="domain" description="Ras-GEF" evidence="3">
    <location>
        <begin position="49"/>
        <end position="288"/>
    </location>
</feature>
<feature type="domain" description="PH" evidence="2">
    <location>
        <begin position="455"/>
        <end position="567"/>
    </location>
</feature>
<feature type="region of interest" description="Disordered" evidence="4">
    <location>
        <begin position="1"/>
        <end position="31"/>
    </location>
</feature>
<feature type="region of interest" description="Disordered" evidence="4">
    <location>
        <begin position="320"/>
        <end position="339"/>
    </location>
</feature>
<feature type="short sequence motif" description="PXXP">
    <location>
        <begin position="329"/>
        <end position="332"/>
    </location>
</feature>
<feature type="sequence conflict" description="In Ref. 2; AAI46737." evidence="5" ref="2">
    <original>R</original>
    <variation>G</variation>
    <location>
        <position position="4"/>
    </location>
</feature>
<feature type="sequence conflict" description="In Ref. 2; AAI46737." evidence="5" ref="2">
    <original>I</original>
    <variation>M</variation>
    <location>
        <position position="428"/>
    </location>
</feature>
<feature type="sequence conflict" description="In Ref. 2; AAI46737." evidence="5" ref="2">
    <original>R</original>
    <variation>C</variation>
    <location>
        <position position="481"/>
    </location>
</feature>
<proteinExistence type="evidence at transcript level"/>
<name>RGPS1_DANRE</name>
<comment type="function">
    <text evidence="1">Guanine nucleotide exchange factor. May be involved in cytoskeletal organization.</text>
</comment>
<comment type="subcellular location">
    <subcellularLocation>
        <location evidence="1">Cytoplasm</location>
    </subcellularLocation>
    <subcellularLocation>
        <location evidence="1">Cell membrane</location>
    </subcellularLocation>
    <text evidence="1">Associated with membranes through the PH domain.</text>
</comment>
<comment type="domain">
    <text evidence="1">The PH domain mediates binding to membranes.</text>
</comment>
<organism>
    <name type="scientific">Danio rerio</name>
    <name type="common">Zebrafish</name>
    <name type="synonym">Brachydanio rerio</name>
    <dbReference type="NCBI Taxonomy" id="7955"/>
    <lineage>
        <taxon>Eukaryota</taxon>
        <taxon>Metazoa</taxon>
        <taxon>Chordata</taxon>
        <taxon>Craniata</taxon>
        <taxon>Vertebrata</taxon>
        <taxon>Euteleostomi</taxon>
        <taxon>Actinopterygii</taxon>
        <taxon>Neopterygii</taxon>
        <taxon>Teleostei</taxon>
        <taxon>Ostariophysi</taxon>
        <taxon>Cypriniformes</taxon>
        <taxon>Danionidae</taxon>
        <taxon>Danioninae</taxon>
        <taxon>Danio</taxon>
    </lineage>
</organism>